<sequence length="276" mass="31006">METLELQGAKLRYHQVGQGPVLIFIPGANGTGDIFLPLAEQLKDHFTVVAVDRRDYGESELTEPLPDSASNPDSDYRVKRDAQDIAELAKSLSDEPVYILGSSSGSIVAMHVLKDYPEVVKKIAFHEPPINTFLPDSTYWKDKNDDIVHQILTEGLEKGMKTFGETLNIAPIDAKMMSQPADTEEGRIEQYKRTMFWSEFEIRQYTHSDITLDDFTKYSDKITLLNGTDSRGSFPQDVNFYINKETGIPIVDIPGGHLGYIQKPEGFADVLLNMWG</sequence>
<proteinExistence type="inferred from homology"/>
<reference key="1">
    <citation type="journal article" date="2005" name="J. Bacteriol.">
        <title>Insights on evolution of virulence and resistance from the complete genome analysis of an early methicillin-resistant Staphylococcus aureus strain and a biofilm-producing methicillin-resistant Staphylococcus epidermidis strain.</title>
        <authorList>
            <person name="Gill S.R."/>
            <person name="Fouts D.E."/>
            <person name="Archer G.L."/>
            <person name="Mongodin E.F."/>
            <person name="DeBoy R.T."/>
            <person name="Ravel J."/>
            <person name="Paulsen I.T."/>
            <person name="Kolonay J.F."/>
            <person name="Brinkac L.M."/>
            <person name="Beanan M.J."/>
            <person name="Dodson R.J."/>
            <person name="Daugherty S.C."/>
            <person name="Madupu R."/>
            <person name="Angiuoli S.V."/>
            <person name="Durkin A.S."/>
            <person name="Haft D.H."/>
            <person name="Vamathevan J.J."/>
            <person name="Khouri H."/>
            <person name="Utterback T.R."/>
            <person name="Lee C."/>
            <person name="Dimitrov G."/>
            <person name="Jiang L."/>
            <person name="Qin H."/>
            <person name="Weidman J."/>
            <person name="Tran K."/>
            <person name="Kang K.H."/>
            <person name="Hance I.R."/>
            <person name="Nelson K.E."/>
            <person name="Fraser C.M."/>
        </authorList>
    </citation>
    <scope>NUCLEOTIDE SEQUENCE [LARGE SCALE GENOMIC DNA]</scope>
    <source>
        <strain>COL</strain>
    </source>
</reference>
<keyword id="KW-0378">Hydrolase</keyword>
<comment type="similarity">
    <text evidence="3">Belongs to the AB hydrolase superfamily.</text>
</comment>
<protein>
    <recommendedName>
        <fullName>Uncharacterized hydrolase SACOL2597</fullName>
        <ecNumber>3.-.-.-</ecNumber>
    </recommendedName>
</protein>
<accession>Q5HCW9</accession>
<organism>
    <name type="scientific">Staphylococcus aureus (strain COL)</name>
    <dbReference type="NCBI Taxonomy" id="93062"/>
    <lineage>
        <taxon>Bacteria</taxon>
        <taxon>Bacillati</taxon>
        <taxon>Bacillota</taxon>
        <taxon>Bacilli</taxon>
        <taxon>Bacillales</taxon>
        <taxon>Staphylococcaceae</taxon>
        <taxon>Staphylococcus</taxon>
    </lineage>
</organism>
<name>Y2597_STAAC</name>
<gene>
    <name type="ordered locus">SACOL2597</name>
</gene>
<dbReference type="EC" id="3.-.-.-"/>
<dbReference type="EMBL" id="CP000046">
    <property type="protein sequence ID" value="AAW38598.1"/>
    <property type="molecule type" value="Genomic_DNA"/>
</dbReference>
<dbReference type="RefSeq" id="WP_000448905.1">
    <property type="nucleotide sequence ID" value="NZ_JBGOFO010000001.1"/>
</dbReference>
<dbReference type="SMR" id="Q5HCW9"/>
<dbReference type="ESTHER" id="staau-SA2367">
    <property type="family name" value="6_AlphaBeta_hydrolase"/>
</dbReference>
<dbReference type="KEGG" id="sac:SACOL2597"/>
<dbReference type="HOGENOM" id="CLU_083329_0_0_9"/>
<dbReference type="Proteomes" id="UP000000530">
    <property type="component" value="Chromosome"/>
</dbReference>
<dbReference type="GO" id="GO:0016020">
    <property type="term" value="C:membrane"/>
    <property type="evidence" value="ECO:0007669"/>
    <property type="project" value="TreeGrafter"/>
</dbReference>
<dbReference type="GO" id="GO:0016787">
    <property type="term" value="F:hydrolase activity"/>
    <property type="evidence" value="ECO:0007669"/>
    <property type="project" value="UniProtKB-KW"/>
</dbReference>
<dbReference type="Gene3D" id="3.40.50.1820">
    <property type="entry name" value="alpha/beta hydrolase"/>
    <property type="match status" value="1"/>
</dbReference>
<dbReference type="InterPro" id="IPR000073">
    <property type="entry name" value="AB_hydrolase_1"/>
</dbReference>
<dbReference type="InterPro" id="IPR029058">
    <property type="entry name" value="AB_hydrolase_fold"/>
</dbReference>
<dbReference type="InterPro" id="IPR050266">
    <property type="entry name" value="AB_hydrolase_sf"/>
</dbReference>
<dbReference type="PANTHER" id="PTHR43798:SF33">
    <property type="entry name" value="HYDROLASE, PUTATIVE (AFU_ORTHOLOGUE AFUA_2G14860)-RELATED"/>
    <property type="match status" value="1"/>
</dbReference>
<dbReference type="PANTHER" id="PTHR43798">
    <property type="entry name" value="MONOACYLGLYCEROL LIPASE"/>
    <property type="match status" value="1"/>
</dbReference>
<dbReference type="Pfam" id="PF00561">
    <property type="entry name" value="Abhydrolase_1"/>
    <property type="match status" value="1"/>
</dbReference>
<dbReference type="SUPFAM" id="SSF53474">
    <property type="entry name" value="alpha/beta-Hydrolases"/>
    <property type="match status" value="1"/>
</dbReference>
<evidence type="ECO:0000255" key="1"/>
<evidence type="ECO:0000256" key="2">
    <source>
        <dbReference type="SAM" id="MobiDB-lite"/>
    </source>
</evidence>
<evidence type="ECO:0000305" key="3"/>
<feature type="chain" id="PRO_0000298610" description="Uncharacterized hydrolase SACOL2597">
    <location>
        <begin position="1"/>
        <end position="276"/>
    </location>
</feature>
<feature type="domain" description="AB hydrolase-1" evidence="1">
    <location>
        <begin position="20"/>
        <end position="137"/>
    </location>
</feature>
<feature type="region of interest" description="Disordered" evidence="2">
    <location>
        <begin position="57"/>
        <end position="76"/>
    </location>
</feature>